<comment type="function">
    <text>Potent microbicidal activity, active against S.aureus and E.coli. It also acts as a membrane-disruptive agent at higher concentrations.</text>
</comment>
<comment type="subcellular location">
    <subcellularLocation>
        <location>Secreted</location>
    </subcellularLocation>
</comment>
<comment type="tissue specificity">
    <text>Expressed by the skin dorsal glands.</text>
</comment>
<comment type="developmental stage">
    <text>Expression starts at metamorphosis and continues into adulthood.</text>
</comment>
<comment type="similarity">
    <text evidence="3">Belongs to the frog skin active peptide (FSAP) family. Brevinin subfamily.</text>
</comment>
<name>RLXN_AQUCT</name>
<feature type="signal peptide" evidence="1">
    <location>
        <begin position="1"/>
        <end position="20"/>
    </location>
</feature>
<feature type="propeptide" id="PRO_0000003465" description="Small acidic peptide">
    <location>
        <begin position="21"/>
        <end position="44"/>
    </location>
</feature>
<feature type="peptide" id="PRO_0000003466" description="Ranalexin" evidence="2">
    <location>
        <begin position="47"/>
        <end position="66"/>
    </location>
</feature>
<feature type="disulfide bond" evidence="2">
    <location>
        <begin position="60"/>
        <end position="66"/>
    </location>
</feature>
<reference key="1">
    <citation type="journal article" date="1994" name="J. Biol. Chem.">
        <title>Ranalexin. A novel antimicrobial peptide from bullfrog (Rana catesbeiana) skin, structurally related to the bacterial antibiotic, polymyxin.</title>
        <authorList>
            <person name="Clark D.P."/>
            <person name="Durell S."/>
            <person name="Maloy W.L."/>
            <person name="Zasloff M."/>
        </authorList>
    </citation>
    <scope>NUCLEOTIDE SEQUENCE [MRNA]</scope>
    <scope>PROTEIN SEQUENCE OF 47-66</scope>
    <source>
        <tissue>Skin</tissue>
        <tissue>Skin secretion</tissue>
    </source>
</reference>
<reference key="2">
    <citation type="journal article" date="1998" name="Eur. J. Biochem.">
        <title>Solution structure of the antimicrobial peptide ranalexin and a study of its interaction with perdeuterated dodecylphosphocholine micelles.</title>
        <authorList>
            <person name="Vignal E."/>
            <person name="Chavanieu A."/>
            <person name="Roch P."/>
            <person name="Chiche L."/>
            <person name="Grassy G."/>
            <person name="Calas B."/>
            <person name="Aumelas A."/>
        </authorList>
    </citation>
    <scope>STRUCTURE BY NMR OF RANALEXIN</scope>
</reference>
<dbReference type="EMBL" id="S69903">
    <property type="protein sequence ID" value="AAB30394.1"/>
    <property type="molecule type" value="mRNA"/>
</dbReference>
<dbReference type="PIR" id="A53744">
    <property type="entry name" value="A53744"/>
</dbReference>
<dbReference type="GO" id="GO:0005576">
    <property type="term" value="C:extracellular region"/>
    <property type="evidence" value="ECO:0000314"/>
    <property type="project" value="UniProtKB"/>
</dbReference>
<dbReference type="GO" id="GO:0050829">
    <property type="term" value="P:defense response to Gram-negative bacterium"/>
    <property type="evidence" value="ECO:0000314"/>
    <property type="project" value="UniProtKB"/>
</dbReference>
<dbReference type="GO" id="GO:0050830">
    <property type="term" value="P:defense response to Gram-positive bacterium"/>
    <property type="evidence" value="ECO:0000314"/>
    <property type="project" value="UniProtKB"/>
</dbReference>
<dbReference type="GO" id="GO:0031640">
    <property type="term" value="P:killing of cells of another organism"/>
    <property type="evidence" value="ECO:0007669"/>
    <property type="project" value="UniProtKB-KW"/>
</dbReference>
<dbReference type="InterPro" id="IPR012520">
    <property type="entry name" value="Antimicrobial_frog_1"/>
</dbReference>
<dbReference type="InterPro" id="IPR004275">
    <property type="entry name" value="Frog_antimicrobial_propeptide"/>
</dbReference>
<dbReference type="Pfam" id="PF08018">
    <property type="entry name" value="Antimicrobial_1"/>
    <property type="match status" value="1"/>
</dbReference>
<dbReference type="Pfam" id="PF03032">
    <property type="entry name" value="FSAP_sig_propep"/>
    <property type="match status" value="1"/>
</dbReference>
<evidence type="ECO:0000255" key="1"/>
<evidence type="ECO:0000269" key="2">
    <source>
    </source>
</evidence>
<evidence type="ECO:0000305" key="3"/>
<accession>P39084</accession>
<sequence length="66" mass="7615">MFTLKKSLLLLFFLGTINLSLCEEERNAEEERRDNPDERDVEVEKRFLGGLIKIVPAMICAVTKKC</sequence>
<protein>
    <recommendedName>
        <fullName>Ranalexin</fullName>
    </recommendedName>
</protein>
<proteinExistence type="evidence at protein level"/>
<keyword id="KW-0878">Amphibian defense peptide</keyword>
<keyword id="KW-0044">Antibiotic</keyword>
<keyword id="KW-0929">Antimicrobial</keyword>
<keyword id="KW-0165">Cleavage on pair of basic residues</keyword>
<keyword id="KW-0204">Cytolysis</keyword>
<keyword id="KW-0903">Direct protein sequencing</keyword>
<keyword id="KW-1015">Disulfide bond</keyword>
<keyword id="KW-0354">Hemolysis</keyword>
<keyword id="KW-0964">Secreted</keyword>
<keyword id="KW-0732">Signal</keyword>
<organism>
    <name type="scientific">Aquarana catesbeiana</name>
    <name type="common">American bullfrog</name>
    <name type="synonym">Rana catesbeiana</name>
    <dbReference type="NCBI Taxonomy" id="8400"/>
    <lineage>
        <taxon>Eukaryota</taxon>
        <taxon>Metazoa</taxon>
        <taxon>Chordata</taxon>
        <taxon>Craniata</taxon>
        <taxon>Vertebrata</taxon>
        <taxon>Euteleostomi</taxon>
        <taxon>Amphibia</taxon>
        <taxon>Batrachia</taxon>
        <taxon>Anura</taxon>
        <taxon>Neobatrachia</taxon>
        <taxon>Ranoidea</taxon>
        <taxon>Ranidae</taxon>
        <taxon>Aquarana</taxon>
    </lineage>
</organism>